<accession>Q9C2X0</accession>
<keyword id="KW-1015">Disulfide bond</keyword>
<keyword id="KW-1185">Reference proteome</keyword>
<keyword id="KW-0964">Secreted</keyword>
<keyword id="KW-0732">Signal</keyword>
<keyword id="KW-0843">Virulence</keyword>
<comment type="function">
    <text evidence="5 6 8">Aerial growth, conidiation, and dispersal of filamentous fungi in the environment rely upon a capability of their secreting small amphipathic proteins called hydrophobins (HPBs) with low sequence identity. Class I can self-assemble into an outermost layer of rodlet bundles on aerial cell surfaces, conferring cellular hydrophobicity that supports fungal growth, development and dispersal; whereas Class II form highly ordered films at water-air interfaces through intermolecular interactions but contribute nothing to the rodlet structure (Probable). Hcf-6 is a class II hydrophobin that is involved in adhesion and in tomato plants infection (PubMed:15121084, PubMed:18958901). Is secreted to form a coat both around and beneath the fungus (PubMed:18958901).</text>
</comment>
<comment type="subunit">
    <text evidence="1">Homotetramer. Further self-assembles to form highly ordered films at water-air interfaces through intermolecular interactions.</text>
</comment>
<comment type="subcellular location">
    <subcellularLocation>
        <location evidence="5 6">Secreted</location>
    </subcellularLocation>
</comment>
<comment type="tissue specificity">
    <text evidence="4 5 6">Expressed in the mycellium.</text>
</comment>
<comment type="induction">
    <text evidence="4 5">Expression is down-regulated by carbon starvation but not by depletion of nitrogen (PubMed:11372654). Induced during invasion of plant tissues (PubMed:15121084).</text>
</comment>
<comment type="disruption phenotype">
    <text evidence="5">Does not affect the hydrophobicity of the cell surface.</text>
</comment>
<comment type="similarity">
    <text evidence="8">Belongs to the cerato-ulmin hydrophobin family.</text>
</comment>
<feature type="signal peptide" evidence="3">
    <location>
        <begin position="1"/>
        <end position="16"/>
    </location>
</feature>
<feature type="chain" id="PRO_5040663846" description="Class II hydrophobin 6">
    <location>
        <begin position="17"/>
        <end position="184"/>
    </location>
</feature>
<feature type="disulfide bond" evidence="2">
    <location>
        <begin position="122"/>
        <end position="169"/>
    </location>
</feature>
<feature type="disulfide bond" evidence="2">
    <location>
        <begin position="130"/>
        <end position="160"/>
    </location>
</feature>
<feature type="disulfide bond" evidence="2">
    <location>
        <begin position="131"/>
        <end position="143"/>
    </location>
</feature>
<feature type="disulfide bond" evidence="2">
    <location>
        <begin position="170"/>
        <end position="181"/>
    </location>
</feature>
<sequence length="184" mass="17147">MNFMLLSAALASMAVAGPIAGTYPITYPSSNTPATYPSGNAPIWSSPIHGGNNGGNGGNGGDNNGGNGGNGGSGGGNTGGNAGNGGGNNGGNNNGGNNGGNTGGEGGNGGNGGNGGAPVELCPANRVPQCCQLSVLGVADVTCASPSSGLTSVSAFEADCANDGTTAQCCLIPVLGLGLFCSNP</sequence>
<name>HFC6_PASFU</name>
<dbReference type="EMBL" id="AJ251294">
    <property type="protein sequence ID" value="CAC27407.1"/>
    <property type="molecule type" value="Genomic_DNA"/>
</dbReference>
<dbReference type="EMBL" id="CP090174">
    <property type="protein sequence ID" value="UJO24336.1"/>
    <property type="molecule type" value="Genomic_DNA"/>
</dbReference>
<dbReference type="OrthoDB" id="4500971at2759"/>
<dbReference type="Proteomes" id="UP000756132">
    <property type="component" value="Chromosome 12"/>
</dbReference>
<dbReference type="GO" id="GO:0005576">
    <property type="term" value="C:extracellular region"/>
    <property type="evidence" value="ECO:0007669"/>
    <property type="project" value="UniProtKB-SubCell"/>
</dbReference>
<dbReference type="CDD" id="cd23508">
    <property type="entry name" value="hydrophobin_II"/>
    <property type="match status" value="1"/>
</dbReference>
<dbReference type="Gene3D" id="3.20.120.10">
    <property type="entry name" value="Hydrophobin"/>
    <property type="match status" value="1"/>
</dbReference>
<dbReference type="InterPro" id="IPR010636">
    <property type="entry name" value="Cerato-ulmin_hydrophobin"/>
</dbReference>
<dbReference type="InterPro" id="IPR036686">
    <property type="entry name" value="Hydrophobin_sf"/>
</dbReference>
<dbReference type="PANTHER" id="PTHR42341">
    <property type="entry name" value="HYDROPHOBIN"/>
    <property type="match status" value="1"/>
</dbReference>
<dbReference type="PANTHER" id="PTHR42341:SF1">
    <property type="entry name" value="HYDROPHOBIN"/>
    <property type="match status" value="1"/>
</dbReference>
<dbReference type="Pfam" id="PF06766">
    <property type="entry name" value="Hydrophobin_2"/>
    <property type="match status" value="1"/>
</dbReference>
<dbReference type="SUPFAM" id="SSF101751">
    <property type="entry name" value="Hydrophobin II, HfbII"/>
    <property type="match status" value="1"/>
</dbReference>
<protein>
    <recommendedName>
        <fullName evidence="7">Class II hydrophobin 6</fullName>
    </recommendedName>
</protein>
<proteinExistence type="evidence at transcript level"/>
<organism>
    <name type="scientific">Passalora fulva</name>
    <name type="common">Tomato leaf mold</name>
    <name type="synonym">Cladosporium fulvum</name>
    <dbReference type="NCBI Taxonomy" id="5499"/>
    <lineage>
        <taxon>Eukaryota</taxon>
        <taxon>Fungi</taxon>
        <taxon>Dikarya</taxon>
        <taxon>Ascomycota</taxon>
        <taxon>Pezizomycotina</taxon>
        <taxon>Dothideomycetes</taxon>
        <taxon>Dothideomycetidae</taxon>
        <taxon>Mycosphaerellales</taxon>
        <taxon>Mycosphaerellaceae</taxon>
        <taxon>Fulvia</taxon>
    </lineage>
</organism>
<gene>
    <name evidence="7" type="primary">hcf-6</name>
    <name type="ORF">CLAFUR5_14044</name>
</gene>
<reference key="1">
    <citation type="journal article" date="2001" name="Microbiol. Res.">
        <title>HCf-6, a novel class II hydrophobin from Cladosporium fulvum.</title>
        <authorList>
            <person name="Nielsen P.S."/>
            <person name="Clark A.J."/>
            <person name="Oliver R.P."/>
            <person name="Huber M."/>
            <person name="Spanu P.D."/>
        </authorList>
    </citation>
    <scope>NUCLEOTIDE SEQUENCE [GENOMIC DNA]</scope>
    <scope>TISSUE SPECIFICITY</scope>
    <scope>INDUCTION</scope>
    <source>
        <strain>Race 4</strain>
    </source>
</reference>
<reference key="2">
    <citation type="journal article" date="2022" name="Microb. Genom.">
        <title>A chromosome-scale genome assembly of the tomato pathogen Cladosporium fulvum reveals a compartmentalized genome architecture and the presence of a dispensable chromosome.</title>
        <authorList>
            <person name="Zaccaron A.Z."/>
            <person name="Chen L.-H."/>
            <person name="Samaras A."/>
            <person name="Stergiopoulos I."/>
        </authorList>
    </citation>
    <scope>NUCLEOTIDE SEQUENCE [LARGE SCALE GENOMIC DNA]</scope>
    <source>
        <strain>Race5_Kim</strain>
    </source>
</reference>
<reference key="3">
    <citation type="journal article" date="2004" name="Fungal Genet. Biol.">
        <title>Stage-specific cellular localisation of two hydrophobins during plant infection by the pathogenic fungus Cladosporium fulvum.</title>
        <authorList>
            <person name="Whiteford J.R."/>
            <person name="Lacroix H."/>
            <person name="Talbot N.J."/>
            <person name="Spanu P.D."/>
        </authorList>
    </citation>
    <scope>FUNCTION</scope>
    <scope>SUBCELLULAR LOCATION</scope>
    <scope>TISSUE SPECIFICITY</scope>
    <scope>DISRUPTION PHENOTYPE</scope>
</reference>
<reference key="4">
    <citation type="journal article" date="2008" name="FEMS Microbiol. Lett.">
        <title>Localization of Cladosporium fulvum hydrophobins reveals a role for HCf-6 in adhesion.</title>
        <authorList>
            <person name="Lacroix H."/>
            <person name="Whiteford J.R."/>
            <person name="Spanu P.D."/>
        </authorList>
    </citation>
    <scope>FUNCTION</scope>
    <scope>SUBCELLULAR LOCATION</scope>
    <scope>TISSUE SPECIFICITY</scope>
</reference>
<evidence type="ECO:0000250" key="1">
    <source>
        <dbReference type="UniProtKB" id="P52754"/>
    </source>
</evidence>
<evidence type="ECO:0000250" key="2">
    <source>
        <dbReference type="UniProtKB" id="Q04571"/>
    </source>
</evidence>
<evidence type="ECO:0000255" key="3"/>
<evidence type="ECO:0000269" key="4">
    <source>
    </source>
</evidence>
<evidence type="ECO:0000269" key="5">
    <source>
    </source>
</evidence>
<evidence type="ECO:0000269" key="6">
    <source>
    </source>
</evidence>
<evidence type="ECO:0000303" key="7">
    <source>
    </source>
</evidence>
<evidence type="ECO:0000305" key="8"/>